<proteinExistence type="evidence at protein level"/>
<gene>
    <name evidence="1" type="primary">hemE</name>
    <name type="ordered locus">Rv2678c</name>
    <name type="ORF">MTV010.02c</name>
</gene>
<comment type="function">
    <text evidence="1">Catalyzes the decarboxylation of four acetate groups of uroporphyrinogen-III to yield coproporphyrinogen-III.</text>
</comment>
<comment type="catalytic activity">
    <reaction evidence="1">
        <text>uroporphyrinogen III + 4 H(+) = coproporphyrinogen III + 4 CO2</text>
        <dbReference type="Rhea" id="RHEA:19865"/>
        <dbReference type="ChEBI" id="CHEBI:15378"/>
        <dbReference type="ChEBI" id="CHEBI:16526"/>
        <dbReference type="ChEBI" id="CHEBI:57308"/>
        <dbReference type="ChEBI" id="CHEBI:57309"/>
        <dbReference type="EC" id="4.1.1.37"/>
    </reaction>
</comment>
<comment type="pathway">
    <text evidence="1">Porphyrin-containing compound metabolism; protoporphyrin-IX biosynthesis; coproporphyrinogen-III from 5-aminolevulinate: step 4/4.</text>
</comment>
<comment type="subunit">
    <text evidence="1">Homodimer.</text>
</comment>
<comment type="subcellular location">
    <subcellularLocation>
        <location evidence="1">Cytoplasm</location>
    </subcellularLocation>
</comment>
<comment type="miscellaneous">
    <text>Was identified as a high-confidence drug target.</text>
</comment>
<comment type="similarity">
    <text evidence="1">Belongs to the uroporphyrinogen decarboxylase family.</text>
</comment>
<evidence type="ECO:0000255" key="1">
    <source>
        <dbReference type="HAMAP-Rule" id="MF_00218"/>
    </source>
</evidence>
<accession>P9WFE1</accession>
<accession>L0TAK1</accession>
<accession>O53231</accession>
<sequence>MSTRRDLPQSPYLAAVTGRKPSRVPVWFMRQAGRSLPEYRALRERYSMLAACFEPDVACEITLQPIRRYDVDAAILFSDIVVPLRAAGVDLDIVADVGPVIADPVRTAADVAAMKPLDPQAIQPVLVAASLLVAELGDVPLIGFAGAPFTLASYLVEGGPSRHHAHVKAMMLAEPASWHALMAKLTDLTIAFLVGQIDAGVDAIQVFDSWAGALSPIDYRQYVLPHSARVFAALGEHGVPMTHFGVGTAELLGAMSEAVTAGERPGRGAVVGVDWRTPLTDAAARVVPGTALQGNLDPAVVLAGWPAVERAARAVVDDGRRAVDAGAAGHIFNLGHGVLPESDPAVLADLVSLVHSL</sequence>
<keyword id="KW-0963">Cytoplasm</keyword>
<keyword id="KW-0210">Decarboxylase</keyword>
<keyword id="KW-0456">Lyase</keyword>
<keyword id="KW-0627">Porphyrin biosynthesis</keyword>
<keyword id="KW-1185">Reference proteome</keyword>
<protein>
    <recommendedName>
        <fullName evidence="1">Uroporphyrinogen decarboxylase</fullName>
        <shortName evidence="1">UPD</shortName>
        <shortName evidence="1">URO-D</shortName>
        <ecNumber evidence="1">4.1.1.37</ecNumber>
    </recommendedName>
</protein>
<dbReference type="EC" id="4.1.1.37" evidence="1"/>
<dbReference type="EMBL" id="AL123456">
    <property type="protein sequence ID" value="CCP45476.1"/>
    <property type="molecule type" value="Genomic_DNA"/>
</dbReference>
<dbReference type="PIR" id="G70869">
    <property type="entry name" value="G70869"/>
</dbReference>
<dbReference type="RefSeq" id="NP_217194.1">
    <property type="nucleotide sequence ID" value="NC_000962.3"/>
</dbReference>
<dbReference type="RefSeq" id="WP_003413873.1">
    <property type="nucleotide sequence ID" value="NZ_NVQJ01000017.1"/>
</dbReference>
<dbReference type="SMR" id="P9WFE1"/>
<dbReference type="FunCoup" id="P9WFE1">
    <property type="interactions" value="572"/>
</dbReference>
<dbReference type="STRING" id="83332.Rv2678c"/>
<dbReference type="PaxDb" id="83332-Rv2678c"/>
<dbReference type="DNASU" id="888934"/>
<dbReference type="GeneID" id="45426666"/>
<dbReference type="GeneID" id="888934"/>
<dbReference type="KEGG" id="mtu:Rv2678c"/>
<dbReference type="KEGG" id="mtv:RVBD_2678c"/>
<dbReference type="TubercuList" id="Rv2678c"/>
<dbReference type="eggNOG" id="COG0407">
    <property type="taxonomic scope" value="Bacteria"/>
</dbReference>
<dbReference type="InParanoid" id="P9WFE1"/>
<dbReference type="OrthoDB" id="9806656at2"/>
<dbReference type="PhylomeDB" id="P9WFE1"/>
<dbReference type="UniPathway" id="UPA00251">
    <property type="reaction ID" value="UER00321"/>
</dbReference>
<dbReference type="Proteomes" id="UP000001584">
    <property type="component" value="Chromosome"/>
</dbReference>
<dbReference type="GO" id="GO:0005829">
    <property type="term" value="C:cytosol"/>
    <property type="evidence" value="ECO:0007005"/>
    <property type="project" value="MTBBASE"/>
</dbReference>
<dbReference type="GO" id="GO:0004853">
    <property type="term" value="F:uroporphyrinogen decarboxylase activity"/>
    <property type="evidence" value="ECO:0000318"/>
    <property type="project" value="GO_Central"/>
</dbReference>
<dbReference type="GO" id="GO:0006783">
    <property type="term" value="P:heme biosynthetic process"/>
    <property type="evidence" value="ECO:0000318"/>
    <property type="project" value="GO_Central"/>
</dbReference>
<dbReference type="GO" id="GO:0006782">
    <property type="term" value="P:protoporphyrinogen IX biosynthetic process"/>
    <property type="evidence" value="ECO:0007669"/>
    <property type="project" value="UniProtKB-UniRule"/>
</dbReference>
<dbReference type="CDD" id="cd00717">
    <property type="entry name" value="URO-D"/>
    <property type="match status" value="1"/>
</dbReference>
<dbReference type="FunFam" id="3.20.20.210:FF:000007">
    <property type="entry name" value="Uroporphyrinogen decarboxylase"/>
    <property type="match status" value="1"/>
</dbReference>
<dbReference type="Gene3D" id="3.20.20.210">
    <property type="match status" value="1"/>
</dbReference>
<dbReference type="HAMAP" id="MF_00218">
    <property type="entry name" value="URO_D"/>
    <property type="match status" value="1"/>
</dbReference>
<dbReference type="InterPro" id="IPR038071">
    <property type="entry name" value="UROD/MetE-like_sf"/>
</dbReference>
<dbReference type="InterPro" id="IPR006361">
    <property type="entry name" value="Uroporphyrinogen_deCO2ase_HemE"/>
</dbReference>
<dbReference type="InterPro" id="IPR000257">
    <property type="entry name" value="Uroporphyrinogen_deCOase"/>
</dbReference>
<dbReference type="NCBIfam" id="TIGR01464">
    <property type="entry name" value="hemE"/>
    <property type="match status" value="1"/>
</dbReference>
<dbReference type="PANTHER" id="PTHR21091">
    <property type="entry name" value="METHYLTETRAHYDROFOLATE:HOMOCYSTEINE METHYLTRANSFERASE RELATED"/>
    <property type="match status" value="1"/>
</dbReference>
<dbReference type="PANTHER" id="PTHR21091:SF169">
    <property type="entry name" value="UROPORPHYRINOGEN DECARBOXYLASE"/>
    <property type="match status" value="1"/>
</dbReference>
<dbReference type="Pfam" id="PF01208">
    <property type="entry name" value="URO-D"/>
    <property type="match status" value="1"/>
</dbReference>
<dbReference type="SUPFAM" id="SSF51726">
    <property type="entry name" value="UROD/MetE-like"/>
    <property type="match status" value="1"/>
</dbReference>
<dbReference type="PROSITE" id="PS00906">
    <property type="entry name" value="UROD_1"/>
    <property type="match status" value="1"/>
</dbReference>
<dbReference type="PROSITE" id="PS00907">
    <property type="entry name" value="UROD_2"/>
    <property type="match status" value="1"/>
</dbReference>
<reference key="1">
    <citation type="journal article" date="1998" name="Nature">
        <title>Deciphering the biology of Mycobacterium tuberculosis from the complete genome sequence.</title>
        <authorList>
            <person name="Cole S.T."/>
            <person name="Brosch R."/>
            <person name="Parkhill J."/>
            <person name="Garnier T."/>
            <person name="Churcher C.M."/>
            <person name="Harris D.E."/>
            <person name="Gordon S.V."/>
            <person name="Eiglmeier K."/>
            <person name="Gas S."/>
            <person name="Barry C.E. III"/>
            <person name="Tekaia F."/>
            <person name="Badcock K."/>
            <person name="Basham D."/>
            <person name="Brown D."/>
            <person name="Chillingworth T."/>
            <person name="Connor R."/>
            <person name="Davies R.M."/>
            <person name="Devlin K."/>
            <person name="Feltwell T."/>
            <person name="Gentles S."/>
            <person name="Hamlin N."/>
            <person name="Holroyd S."/>
            <person name="Hornsby T."/>
            <person name="Jagels K."/>
            <person name="Krogh A."/>
            <person name="McLean J."/>
            <person name="Moule S."/>
            <person name="Murphy L.D."/>
            <person name="Oliver S."/>
            <person name="Osborne J."/>
            <person name="Quail M.A."/>
            <person name="Rajandream M.A."/>
            <person name="Rogers J."/>
            <person name="Rutter S."/>
            <person name="Seeger K."/>
            <person name="Skelton S."/>
            <person name="Squares S."/>
            <person name="Squares R."/>
            <person name="Sulston J.E."/>
            <person name="Taylor K."/>
            <person name="Whitehead S."/>
            <person name="Barrell B.G."/>
        </authorList>
    </citation>
    <scope>NUCLEOTIDE SEQUENCE [LARGE SCALE GENOMIC DNA]</scope>
    <source>
        <strain>ATCC 25618 / H37Rv</strain>
    </source>
</reference>
<reference key="2">
    <citation type="journal article" date="2008" name="BMC Syst. Biol.">
        <title>targetTB: a target identification pipeline for Mycobacterium tuberculosis through an interactome, reactome and genome-scale structural analysis.</title>
        <authorList>
            <person name="Raman K."/>
            <person name="Yeturu K."/>
            <person name="Chandra N."/>
        </authorList>
    </citation>
    <scope>IDENTIFICATION AS A DRUG TARGET [LARGE SCALE ANALYSIS]</scope>
</reference>
<reference key="3">
    <citation type="journal article" date="2011" name="Mol. Cell. Proteomics">
        <title>Proteogenomic analysis of Mycobacterium tuberculosis by high resolution mass spectrometry.</title>
        <authorList>
            <person name="Kelkar D.S."/>
            <person name="Kumar D."/>
            <person name="Kumar P."/>
            <person name="Balakrishnan L."/>
            <person name="Muthusamy B."/>
            <person name="Yadav A.K."/>
            <person name="Shrivastava P."/>
            <person name="Marimuthu A."/>
            <person name="Anand S."/>
            <person name="Sundaram H."/>
            <person name="Kingsbury R."/>
            <person name="Harsha H.C."/>
            <person name="Nair B."/>
            <person name="Prasad T.S."/>
            <person name="Chauhan D.S."/>
            <person name="Katoch K."/>
            <person name="Katoch V.M."/>
            <person name="Kumar P."/>
            <person name="Chaerkady R."/>
            <person name="Ramachandran S."/>
            <person name="Dash D."/>
            <person name="Pandey A."/>
        </authorList>
    </citation>
    <scope>IDENTIFICATION BY MASS SPECTROMETRY [LARGE SCALE ANALYSIS]</scope>
    <source>
        <strain>ATCC 25618 / H37Rv</strain>
    </source>
</reference>
<feature type="chain" id="PRO_0000187616" description="Uroporphyrinogen decarboxylase">
    <location>
        <begin position="1"/>
        <end position="357"/>
    </location>
</feature>
<feature type="binding site" evidence="1">
    <location>
        <begin position="30"/>
        <end position="34"/>
    </location>
    <ligand>
        <name>substrate</name>
    </ligand>
</feature>
<feature type="binding site" evidence="1">
    <location>
        <position position="79"/>
    </location>
    <ligand>
        <name>substrate</name>
    </ligand>
</feature>
<feature type="binding site" evidence="1">
    <location>
        <position position="154"/>
    </location>
    <ligand>
        <name>substrate</name>
    </ligand>
</feature>
<feature type="binding site" evidence="1">
    <location>
        <position position="209"/>
    </location>
    <ligand>
        <name>substrate</name>
    </ligand>
</feature>
<feature type="binding site" evidence="1">
    <location>
        <position position="336"/>
    </location>
    <ligand>
        <name>substrate</name>
    </ligand>
</feature>
<feature type="site" description="Transition state stabilizer" evidence="1">
    <location>
        <position position="79"/>
    </location>
</feature>
<name>DCUP_MYCTU</name>
<organism>
    <name type="scientific">Mycobacterium tuberculosis (strain ATCC 25618 / H37Rv)</name>
    <dbReference type="NCBI Taxonomy" id="83332"/>
    <lineage>
        <taxon>Bacteria</taxon>
        <taxon>Bacillati</taxon>
        <taxon>Actinomycetota</taxon>
        <taxon>Actinomycetes</taxon>
        <taxon>Mycobacteriales</taxon>
        <taxon>Mycobacteriaceae</taxon>
        <taxon>Mycobacterium</taxon>
        <taxon>Mycobacterium tuberculosis complex</taxon>
    </lineage>
</organism>